<proteinExistence type="inferred from homology"/>
<reference key="1">
    <citation type="journal article" date="2007" name="BMC Plant Biol.">
        <title>Complete plastid genome sequences suggest strong selection for retention of photosynthetic genes in the parasitic plant genus Cuscuta.</title>
        <authorList>
            <person name="McNeal J.R."/>
            <person name="Kuehl J.V."/>
            <person name="Boore J.L."/>
            <person name="dePamphilis C.W."/>
        </authorList>
    </citation>
    <scope>NUCLEOTIDE SEQUENCE [LARGE SCALE GENOMIC DNA]</scope>
</reference>
<dbReference type="EMBL" id="EU118126">
    <property type="protein sequence ID" value="ABV02391.1"/>
    <property type="molecule type" value="Genomic_DNA"/>
</dbReference>
<dbReference type="EMBL" id="EU118126">
    <property type="protein sequence ID" value="ABV02414.1"/>
    <property type="molecule type" value="Genomic_DNA"/>
</dbReference>
<dbReference type="GO" id="GO:0009570">
    <property type="term" value="C:chloroplast stroma"/>
    <property type="evidence" value="ECO:0007669"/>
    <property type="project" value="UniProtKB-SubCell"/>
</dbReference>
<dbReference type="GO" id="GO:0005524">
    <property type="term" value="F:ATP binding"/>
    <property type="evidence" value="ECO:0007669"/>
    <property type="project" value="UniProtKB-KW"/>
</dbReference>
<dbReference type="GO" id="GO:0016887">
    <property type="term" value="F:ATP hydrolysis activity"/>
    <property type="evidence" value="ECO:0007669"/>
    <property type="project" value="InterPro"/>
</dbReference>
<dbReference type="CDD" id="cd19505">
    <property type="entry name" value="RecA-like_Ycf2"/>
    <property type="match status" value="1"/>
</dbReference>
<dbReference type="Gene3D" id="3.40.50.300">
    <property type="entry name" value="P-loop containing nucleotide triphosphate hydrolases"/>
    <property type="match status" value="1"/>
</dbReference>
<dbReference type="HAMAP" id="MF_01330">
    <property type="entry name" value="Ycf2"/>
    <property type="match status" value="1"/>
</dbReference>
<dbReference type="InterPro" id="IPR003593">
    <property type="entry name" value="AAA+_ATPase"/>
</dbReference>
<dbReference type="InterPro" id="IPR003959">
    <property type="entry name" value="ATPase_AAA_core"/>
</dbReference>
<dbReference type="InterPro" id="IPR027417">
    <property type="entry name" value="P-loop_NTPase"/>
</dbReference>
<dbReference type="InterPro" id="IPR008543">
    <property type="entry name" value="Uncharacterised_Ycf2"/>
</dbReference>
<dbReference type="InterPro" id="IPR056777">
    <property type="entry name" value="Ycf2_N"/>
</dbReference>
<dbReference type="PANTHER" id="PTHR33078:SF89">
    <property type="entry name" value="PROTEIN YCF2"/>
    <property type="match status" value="1"/>
</dbReference>
<dbReference type="PANTHER" id="PTHR33078">
    <property type="entry name" value="PROTEIN YCF2-RELATED"/>
    <property type="match status" value="1"/>
</dbReference>
<dbReference type="Pfam" id="PF00004">
    <property type="entry name" value="AAA"/>
    <property type="match status" value="1"/>
</dbReference>
<dbReference type="Pfam" id="PF05695">
    <property type="entry name" value="Ycf2"/>
    <property type="match status" value="2"/>
</dbReference>
<dbReference type="SMART" id="SM00382">
    <property type="entry name" value="AAA"/>
    <property type="match status" value="1"/>
</dbReference>
<dbReference type="SUPFAM" id="SSF52540">
    <property type="entry name" value="P-loop containing nucleoside triphosphate hydrolases"/>
    <property type="match status" value="1"/>
</dbReference>
<gene>
    <name evidence="1" type="primary">ycf2-A</name>
</gene>
<gene>
    <name evidence="1" type="primary">ycf2-B</name>
</gene>
<protein>
    <recommendedName>
        <fullName evidence="1">Protein Ycf2</fullName>
    </recommendedName>
</protein>
<name>YCF2_IPOPU</name>
<evidence type="ECO:0000255" key="1">
    <source>
        <dbReference type="HAMAP-Rule" id="MF_01330"/>
    </source>
</evidence>
<keyword id="KW-0067">ATP-binding</keyword>
<keyword id="KW-0150">Chloroplast</keyword>
<keyword id="KW-0547">Nucleotide-binding</keyword>
<keyword id="KW-0934">Plastid</keyword>
<comment type="function">
    <text evidence="1">Probable ATPase of unknown function. Its presence in a non-photosynthetic plant (Epifagus virginiana) and experiments in tobacco indicate that it has an essential function which is probably not related to photosynthesis.</text>
</comment>
<comment type="subcellular location">
    <subcellularLocation>
        <location evidence="1">Plastid</location>
        <location evidence="1">Chloroplast stroma</location>
    </subcellularLocation>
</comment>
<comment type="similarity">
    <text evidence="1">Belongs to the Ycf2 family.</text>
</comment>
<accession>A7Y3J6</accession>
<geneLocation type="chloroplast"/>
<organism>
    <name type="scientific">Ipomoea purpurea</name>
    <name type="common">Common morning glory</name>
    <name type="synonym">Pharbitis purpurea</name>
    <dbReference type="NCBI Taxonomy" id="4121"/>
    <lineage>
        <taxon>Eukaryota</taxon>
        <taxon>Viridiplantae</taxon>
        <taxon>Streptophyta</taxon>
        <taxon>Embryophyta</taxon>
        <taxon>Tracheophyta</taxon>
        <taxon>Spermatophyta</taxon>
        <taxon>Magnoliopsida</taxon>
        <taxon>eudicotyledons</taxon>
        <taxon>Gunneridae</taxon>
        <taxon>Pentapetalae</taxon>
        <taxon>asterids</taxon>
        <taxon>lamiids</taxon>
        <taxon>Solanales</taxon>
        <taxon>Convolvulaceae</taxon>
        <taxon>Ipomoeeae</taxon>
        <taxon>Ipomoea</taxon>
    </lineage>
</organism>
<feature type="chain" id="PRO_0000343774" description="Protein Ycf2">
    <location>
        <begin position="1"/>
        <end position="2197"/>
    </location>
</feature>
<feature type="binding site" evidence="1">
    <location>
        <begin position="1539"/>
        <end position="1546"/>
    </location>
    <ligand>
        <name>ATP</name>
        <dbReference type="ChEBI" id="CHEBI:30616"/>
    </ligand>
</feature>
<sequence>MQKRQIKTQKRQIKFCIFELREIMREIKNSHYFLDSWTQFNSVGSFIHIFFHQERFLKLFDPRIFSILLSRNFQGSTSNRSFTIRGVILFVVAVLIYRINNRNMVERKNLYLTGFLPIPMNSTGPRNDRLEEAVGSSNINRLIVSLLYLPKGKKISESSFLNRKESTGVLSITKRNSSCKISNETVAEIEILFKEKDSKSLEFLFVYYMDDDSTHKDHDWKLADPILLERLAKDWISYLMSAFREKRPIEAGIFFKQHEHVSHLFSRNKGAISLQNCTQFHMWKFRQDLFLLFPSWGNNPPESYFWLGNVWLGKKDRFFSKVRNVWSNIQYDSTRSSFVQVTDSSQLKGSSDQSRDHLDSISNEDSEYRTLINQREIQQLEERSIPWDPSFLQTERKEIESDRFPKNLSGYSSMSQLFTEREKPMINHLFPEEMEEFLGNATRSVRSFFSDRWSELHLGSNPTERSTREQKLLKKHLSFVRRSENKEMIHLFKIITYLQNTISIHSISLDPGCDMVPKDDPDLDSSNKISFFNKNPFFDFFHRFHERNRGGYALHHDFESEERLQEMADLFTLSITEPDLVYHKGFSFSIDSYGLDQKKFLNEVFNTRAESKKKSLLVLSPVLFRYEENEYFFRRIRQKRVWISCGNGLGDLKQKMVVFASNNIMEAVNQYRLIRNLIQIQYNRYIRSVLNRFFLMNRSDRNFEYGIQRDQKGKDTLSHRTLMKYMIKQDYAYIYKWSNGSKNCQEHLEHFLSEQKSCFQVHFQVQKSRFQVMFDQLRIYTRIRINQFLMNYSEVCKKFEKDVYKLLTFFLPKWSRSLRFFFLFSQSLRFLGKSLHFLAKLLFFLSNSLSFPFSCVSFGNTPIHRSEINIYELKGPNDKLCNQLLESIGFQIVHLKKLNPFLLADDGTSKFLINGGTISPFLFNKIPKRMIDSFHTRTNRRKSFDNKDSYFSMIFYDQDNWLNPGKPFHRSSLISSFYKANRLRFLNNPHHFCFYCNKRFPFSVEKARNNNSYFLYGQFLNILFLRKKRFSLCVGKKKHVFGGRTTISPIESQVSNIFIPNDFPQSGDERYNLDKSFHFLSRPDPFVRRAIYSIVDTSGNPLTEGQIVNFERTYCQPLSDMNLSDSEGKNLHECPNFNSNIGLIHIPCSEKDFPSEKRKKQSLCLKKCVGVQKGRMYTTFQRDSAFSILSKKWNLFQTYMPSFFTSTGYKYLNSIFLDTFSDLLSILSSSVSIFHDIMGISWRILQTKLWKMQFFLRSEISSKWLHNLLSKEMIHRNKKNKSSLISTHLRSPNVWEFLYSILFLVLVAGYLVLIHLFFVSQTFSELQTEFEKVKSLMIPSSMIEIELRKLLDKYPTSEPNSFWLKNLFLFPINRIAFSINTRHLSHTSKEIYSLIRKRKNVNGDWIDDKIESWVANSDSIHEEERKFLVQLSALTTEKRILLSLTHSDHLSKNDSGYQMIEQPGAIYLRYLVDIHQKHLMNYEFNISCLAERRIFLAHYQTITYSQTSSGANSFHFPSDGKPFSLRLALSPSRGILVIGSIGTGRSYLVKYLATNSYVPFITVFLNKLLDKKPKFIADIDIDDSDNIDASDDIDIDDSDDIDRDLDTELELLTWMNALTMDKEMMAEINRLSITLQFELARAMSPCIIWIPNIHDLDVNESNYLSLGLLVNHLSRDCERCSTRNILVIASTHIPQKVDPALIAPNKFNTCIKLRRLLIPQQRKYFFTLSYTRGFHLEKKMFHTNGFGSITMGPNARDLVALTNEVLSISITQKKSIIDTNTIRSALHRQTWDLRSQVRSVQDHGILFYQIGRAVAQNVLLSNCPIDPISIYLKKKLCNEGDSYLYKWYFELGTSMKKFTILLYLLSCSAGSVAQDLWSLPGPDEKNGITSYGLVENDSDLVHGLLEVEGALVGSSRTEKNCSQFDNDRVTLLLRPEPRNPLDMMQNGSCSILDQIFLYEKYESEFEEGALDPNLDPQQIEEDLFNHIVWAPRIWRPWGFLCIERPNELGFSYWSRSFRGKRIFYDKEDELQENDSEFLQSGTMQYKTRDRSSKEQGFFRISQFIWDPADPLFFLFKDRSPGSVFSRRELFADEEMSKGLLTAQTYQTDEPSTSRSKSTRWFIKNTQEKHFELLINRQRWLRTNSSLSNGSFRSNTLSESYQYLSNLFLSNGTLFDQMTKTLLRKRWLFPDEMKIGFM</sequence>